<sequence length="375" mass="40909">MADPAQLTVTPSRHEKSLGLLTSKFVSLLQEAEDGVLDLKAAADTLAVRQKRRIYDITNVLEGIGLIEKKSKNSIQWKGVGPGCNTREIADKLIDLKAELADLEQREQELDQQRVWVQQSIKNVTDDVQNTGLAYLNHEDICRCFRGDTLLAIRAPSGTCLEVPVPENTNGQKKFQIHLKSTTGPIEVLLVNKDTSSSAPVVVPVPPPEDLIQAPPAVPSTPQRPALTPQNDIATSPAPTVPHSTISNAESQDCPTGQTFSMENTTSSRLPSIDTCPLQSSASLDNSNDSPDPSTSFQPIKSDLSDVLELPKDMISDFFDQTKECITSDLLEELMSSEVFAPLLRLSPPPGDHDYVYNLDESEGVCDLFDVPINL</sequence>
<name>E2F4_XENLA</name>
<reference key="1">
    <citation type="submission" date="2004-07" db="EMBL/GenBank/DDBJ databases">
        <authorList>
            <consortium name="NIH - Xenopus Gene Collection (XGC) project"/>
        </authorList>
    </citation>
    <scope>NUCLEOTIDE SEQUENCE [LARGE SCALE MRNA]</scope>
    <source>
        <tissue evidence="7">Ovary</tissue>
    </source>
</reference>
<reference key="2">
    <citation type="journal article" date="2014" name="Genes Dev.">
        <title>Multicilin drives centriole biogenesis via E2f proteins.</title>
        <authorList>
            <person name="Ma L."/>
            <person name="Quigley I."/>
            <person name="Omran H."/>
            <person name="Kintner C."/>
        </authorList>
    </citation>
    <scope>FUNCTION</scope>
    <scope>IDENTIFICATION IN THE EDM COMPLEX</scope>
</reference>
<dbReference type="EMBL" id="BC077333">
    <property type="protein sequence ID" value="AAH77333.1"/>
    <property type="molecule type" value="mRNA"/>
</dbReference>
<dbReference type="RefSeq" id="NP_001086706.1">
    <property type="nucleotide sequence ID" value="NM_001093237.1"/>
</dbReference>
<dbReference type="SMR" id="Q6DE14"/>
<dbReference type="DNASU" id="446541"/>
<dbReference type="GeneID" id="446541"/>
<dbReference type="KEGG" id="xla:446541"/>
<dbReference type="AGR" id="Xenbase:XB-GENE-482725"/>
<dbReference type="CTD" id="446541"/>
<dbReference type="Xenbase" id="XB-GENE-482725">
    <property type="gene designation" value="e2f4.S"/>
</dbReference>
<dbReference type="OMA" id="GHEKSLG"/>
<dbReference type="OrthoDB" id="1743261at2759"/>
<dbReference type="Proteomes" id="UP000186698">
    <property type="component" value="Chromosome 4S"/>
</dbReference>
<dbReference type="Bgee" id="446541">
    <property type="expression patterns" value="Expressed in blastula and 19 other cell types or tissues"/>
</dbReference>
<dbReference type="GO" id="GO:0090575">
    <property type="term" value="C:RNA polymerase II transcription regulator complex"/>
    <property type="evidence" value="ECO:0000318"/>
    <property type="project" value="GO_Central"/>
</dbReference>
<dbReference type="GO" id="GO:0003700">
    <property type="term" value="F:DNA-binding transcription factor activity"/>
    <property type="evidence" value="ECO:0000315"/>
    <property type="project" value="UniProtKB"/>
</dbReference>
<dbReference type="GO" id="GO:0000981">
    <property type="term" value="F:DNA-binding transcription factor activity, RNA polymerase II-specific"/>
    <property type="evidence" value="ECO:0000318"/>
    <property type="project" value="GO_Central"/>
</dbReference>
<dbReference type="GO" id="GO:0046983">
    <property type="term" value="F:protein dimerization activity"/>
    <property type="evidence" value="ECO:0007669"/>
    <property type="project" value="InterPro"/>
</dbReference>
<dbReference type="GO" id="GO:0000978">
    <property type="term" value="F:RNA polymerase II cis-regulatory region sequence-specific DNA binding"/>
    <property type="evidence" value="ECO:0000318"/>
    <property type="project" value="GO_Central"/>
</dbReference>
<dbReference type="GO" id="GO:0098534">
    <property type="term" value="P:centriole assembly"/>
    <property type="evidence" value="ECO:0000315"/>
    <property type="project" value="UniProtKB"/>
</dbReference>
<dbReference type="GO" id="GO:0044458">
    <property type="term" value="P:motile cilium assembly"/>
    <property type="evidence" value="ECO:0000315"/>
    <property type="project" value="UniProtKB"/>
</dbReference>
<dbReference type="GO" id="GO:1903251">
    <property type="term" value="P:multi-ciliated epithelial cell differentiation"/>
    <property type="evidence" value="ECO:0000315"/>
    <property type="project" value="UniProtKB"/>
</dbReference>
<dbReference type="GO" id="GO:0045944">
    <property type="term" value="P:positive regulation of transcription by RNA polymerase II"/>
    <property type="evidence" value="ECO:0000315"/>
    <property type="project" value="UniProtKB"/>
</dbReference>
<dbReference type="GO" id="GO:0006357">
    <property type="term" value="P:regulation of transcription by RNA polymerase II"/>
    <property type="evidence" value="ECO:0000318"/>
    <property type="project" value="GO_Central"/>
</dbReference>
<dbReference type="CDD" id="cd14660">
    <property type="entry name" value="E2F_DD"/>
    <property type="match status" value="1"/>
</dbReference>
<dbReference type="FunFam" id="1.10.10.10:FF:000008">
    <property type="entry name" value="E2F transcription factor 1"/>
    <property type="match status" value="1"/>
</dbReference>
<dbReference type="Gene3D" id="6.10.250.540">
    <property type="match status" value="1"/>
</dbReference>
<dbReference type="Gene3D" id="1.10.10.10">
    <property type="entry name" value="Winged helix-like DNA-binding domain superfamily/Winged helix DNA-binding domain"/>
    <property type="match status" value="1"/>
</dbReference>
<dbReference type="InterPro" id="IPR015633">
    <property type="entry name" value="E2F"/>
</dbReference>
<dbReference type="InterPro" id="IPR037241">
    <property type="entry name" value="E2F-DP_heterodim"/>
</dbReference>
<dbReference type="InterPro" id="IPR032198">
    <property type="entry name" value="E2F_CC-MB"/>
</dbReference>
<dbReference type="InterPro" id="IPR003316">
    <property type="entry name" value="E2F_WHTH_DNA-bd_dom"/>
</dbReference>
<dbReference type="InterPro" id="IPR036388">
    <property type="entry name" value="WH-like_DNA-bd_sf"/>
</dbReference>
<dbReference type="InterPro" id="IPR036390">
    <property type="entry name" value="WH_DNA-bd_sf"/>
</dbReference>
<dbReference type="PANTHER" id="PTHR12081">
    <property type="entry name" value="TRANSCRIPTION FACTOR E2F"/>
    <property type="match status" value="1"/>
</dbReference>
<dbReference type="PANTHER" id="PTHR12081:SF42">
    <property type="entry name" value="TRANSCRIPTION FACTOR E2F4"/>
    <property type="match status" value="1"/>
</dbReference>
<dbReference type="Pfam" id="PF16421">
    <property type="entry name" value="E2F_CC-MB"/>
    <property type="match status" value="1"/>
</dbReference>
<dbReference type="Pfam" id="PF02319">
    <property type="entry name" value="E2F_TDP"/>
    <property type="match status" value="1"/>
</dbReference>
<dbReference type="SMART" id="SM01372">
    <property type="entry name" value="E2F_TDP"/>
    <property type="match status" value="1"/>
</dbReference>
<dbReference type="SUPFAM" id="SSF144074">
    <property type="entry name" value="E2F-DP heterodimerization region"/>
    <property type="match status" value="1"/>
</dbReference>
<dbReference type="SUPFAM" id="SSF46785">
    <property type="entry name" value="Winged helix' DNA-binding domain"/>
    <property type="match status" value="1"/>
</dbReference>
<evidence type="ECO:0000250" key="1"/>
<evidence type="ECO:0000250" key="2">
    <source>
        <dbReference type="UniProtKB" id="Q16254"/>
    </source>
</evidence>
<evidence type="ECO:0000255" key="3"/>
<evidence type="ECO:0000255" key="4">
    <source>
        <dbReference type="RuleBase" id="RU003796"/>
    </source>
</evidence>
<evidence type="ECO:0000256" key="5">
    <source>
        <dbReference type="SAM" id="MobiDB-lite"/>
    </source>
</evidence>
<evidence type="ECO:0000269" key="6">
    <source>
    </source>
</evidence>
<evidence type="ECO:0000312" key="7">
    <source>
        <dbReference type="EMBL" id="AAH77333.1"/>
    </source>
</evidence>
<evidence type="ECO:0000312" key="8">
    <source>
        <dbReference type="Xenbase" id="XB-GENE-482725"/>
    </source>
</evidence>
<feature type="chain" id="PRO_0000430813" description="Transcription factor E2F4">
    <location>
        <begin position="1"/>
        <end position="375"/>
    </location>
</feature>
<feature type="DNA-binding region" evidence="3">
    <location>
        <begin position="12"/>
        <end position="81"/>
    </location>
</feature>
<feature type="region of interest" description="Leucine-zipper" evidence="3">
    <location>
        <begin position="39"/>
        <end position="61"/>
    </location>
</feature>
<feature type="region of interest" description="Dimerization" evidence="3">
    <location>
        <begin position="82"/>
        <end position="177"/>
    </location>
</feature>
<feature type="region of interest" description="Disordered" evidence="5">
    <location>
        <begin position="197"/>
        <end position="300"/>
    </location>
</feature>
<feature type="region of interest" description="Transactivation" evidence="3">
    <location>
        <begin position="299"/>
        <end position="375"/>
    </location>
</feature>
<feature type="short sequence motif" description="DEF box" evidence="1">
    <location>
        <begin position="44"/>
        <end position="81"/>
    </location>
</feature>
<feature type="compositionally biased region" description="Polar residues" evidence="5">
    <location>
        <begin position="220"/>
        <end position="270"/>
    </location>
</feature>
<feature type="compositionally biased region" description="Low complexity" evidence="5">
    <location>
        <begin position="280"/>
        <end position="296"/>
    </location>
</feature>
<protein>
    <recommendedName>
        <fullName evidence="2">Transcription factor E2F4</fullName>
        <shortName evidence="2">E2F-4</shortName>
    </recommendedName>
</protein>
<organism evidence="7">
    <name type="scientific">Xenopus laevis</name>
    <name type="common">African clawed frog</name>
    <dbReference type="NCBI Taxonomy" id="8355"/>
    <lineage>
        <taxon>Eukaryota</taxon>
        <taxon>Metazoa</taxon>
        <taxon>Chordata</taxon>
        <taxon>Craniata</taxon>
        <taxon>Vertebrata</taxon>
        <taxon>Euteleostomi</taxon>
        <taxon>Amphibia</taxon>
        <taxon>Batrachia</taxon>
        <taxon>Anura</taxon>
        <taxon>Pipoidea</taxon>
        <taxon>Pipidae</taxon>
        <taxon>Xenopodinae</taxon>
        <taxon>Xenopus</taxon>
        <taxon>Xenopus</taxon>
    </lineage>
</organism>
<proteinExistence type="evidence at protein level"/>
<gene>
    <name evidence="8" type="primary">e2f4</name>
</gene>
<comment type="function">
    <text evidence="2 6">Transcription activator that binds DNA cooperatively with DP proteins through the E2 recognition site, 5'-TTTC[CG]CGC-3' found in the promoter region of a number of genes. Component of the EDM complex, a complex specifically required for multiciliate cell differentiation: the EDM complex binds and activate genes required for centriole biogenesis. Activates genes required for centriole assembly (plk4, cep152) and genes specifically required for motile cilia formation (foxj1). Also promotes the deuterosome pathway of centriole biogenesis by activating expression of deup1, but not its paralog cep63.</text>
</comment>
<comment type="subunit">
    <text evidence="2 6">Component of the drtf1/e2f transcription factor complex. Component of the EDM complex, at least composed of e2f4, e2f5, mcidas and tfdp1.</text>
</comment>
<comment type="subcellular location">
    <subcellularLocation>
        <location evidence="2">Nucleus</location>
    </subcellularLocation>
</comment>
<comment type="similarity">
    <text evidence="4">Belongs to the E2F/DP family.</text>
</comment>
<keyword id="KW-0010">Activator</keyword>
<keyword id="KW-0970">Cilium biogenesis/degradation</keyword>
<keyword id="KW-0238">DNA-binding</keyword>
<keyword id="KW-0539">Nucleus</keyword>
<keyword id="KW-1185">Reference proteome</keyword>
<keyword id="KW-0804">Transcription</keyword>
<keyword id="KW-0805">Transcription regulation</keyword>
<accession>Q6DE14</accession>